<proteinExistence type="evidence at protein level"/>
<feature type="chain" id="PRO_0000072293" description="Dolichyl-diphosphooligosaccharide--protein glycosyltransferase subunit STT3">
    <location>
        <begin position="1"/>
        <end position="718"/>
    </location>
</feature>
<feature type="topological domain" description="Cytoplasmic" evidence="23">
    <location>
        <begin position="1"/>
        <end position="8"/>
    </location>
</feature>
<feature type="transmembrane region" description="Helical" evidence="17">
    <location>
        <begin position="9"/>
        <end position="30"/>
    </location>
</feature>
<feature type="topological domain" description="Lumenal" evidence="23">
    <location>
        <begin position="31"/>
        <end position="118"/>
    </location>
</feature>
<feature type="transmembrane region" description="Helical" evidence="17">
    <location>
        <begin position="119"/>
        <end position="137"/>
    </location>
</feature>
<feature type="topological domain" description="Cytoplasmic" evidence="23">
    <location>
        <begin position="138"/>
        <end position="139"/>
    </location>
</feature>
<feature type="transmembrane region" description="Helical" evidence="17">
    <location>
        <begin position="140"/>
        <end position="157"/>
    </location>
</feature>
<feature type="topological domain" description="Lumenal" evidence="23">
    <location>
        <begin position="158"/>
        <end position="168"/>
    </location>
</feature>
<feature type="transmembrane region" description="Helical" evidence="17">
    <location>
        <begin position="169"/>
        <end position="188"/>
    </location>
</feature>
<feature type="topological domain" description="Cytoplasmic" evidence="23">
    <location>
        <begin position="189"/>
        <end position="190"/>
    </location>
</feature>
<feature type="transmembrane region" description="Helical" evidence="17">
    <location>
        <begin position="191"/>
        <end position="205"/>
    </location>
</feature>
<feature type="topological domain" description="Lumenal" evidence="23">
    <location>
        <begin position="206"/>
        <end position="210"/>
    </location>
</feature>
<feature type="transmembrane region" description="Helical" evidence="17">
    <location>
        <begin position="211"/>
        <end position="227"/>
    </location>
</feature>
<feature type="topological domain" description="Cytoplasmic" evidence="23">
    <location>
        <begin position="228"/>
        <end position="232"/>
    </location>
</feature>
<feature type="transmembrane region" description="Helical" evidence="17">
    <location>
        <begin position="233"/>
        <end position="258"/>
    </location>
</feature>
<feature type="topological domain" description="Lumenal" evidence="23">
    <location>
        <begin position="259"/>
        <end position="266"/>
    </location>
</feature>
<feature type="transmembrane region" description="Helical" evidence="17">
    <location>
        <begin position="267"/>
        <end position="286"/>
    </location>
</feature>
<feature type="topological domain" description="Cytoplasmic" evidence="23">
    <location>
        <begin position="287"/>
        <end position="300"/>
    </location>
</feature>
<feature type="transmembrane region" description="Helical" evidence="3">
    <location>
        <begin position="301"/>
        <end position="322"/>
    </location>
</feature>
<feature type="topological domain" description="Lumenal" evidence="23">
    <location>
        <begin position="323"/>
        <end position="355"/>
    </location>
</feature>
<feature type="transmembrane region" description="Helical" evidence="17">
    <location>
        <begin position="356"/>
        <end position="378"/>
    </location>
</feature>
<feature type="topological domain" description="Cytoplasmic" evidence="23">
    <location>
        <begin position="379"/>
        <end position="384"/>
    </location>
</feature>
<feature type="transmembrane region" description="Helical" evidence="17">
    <location>
        <begin position="385"/>
        <end position="401"/>
    </location>
</feature>
<feature type="topological domain" description="Lumenal" evidence="23">
    <location>
        <begin position="402"/>
        <end position="405"/>
    </location>
</feature>
<feature type="transmembrane region" description="Helical" evidence="17">
    <location>
        <begin position="406"/>
        <end position="427"/>
    </location>
</feature>
<feature type="topological domain" description="Cytoplasmic" evidence="23">
    <location>
        <begin position="428"/>
        <end position="441"/>
    </location>
</feature>
<feature type="transmembrane region" description="Helical" evidence="17">
    <location>
        <begin position="442"/>
        <end position="464"/>
    </location>
</feature>
<feature type="topological domain" description="Lumenal" evidence="23">
    <location>
        <begin position="465"/>
        <end position="718"/>
    </location>
</feature>
<feature type="region of interest" description="Interacts with target acceptor peptide in protein substrate" evidence="1">
    <location>
        <begin position="516"/>
        <end position="518"/>
    </location>
</feature>
<feature type="region of interest" description="Disordered" evidence="5">
    <location>
        <begin position="694"/>
        <end position="718"/>
    </location>
</feature>
<feature type="short sequence motif" description="DXD motif 1" evidence="2">
    <location>
        <begin position="45"/>
        <end position="47"/>
    </location>
</feature>
<feature type="short sequence motif" description="DXD motif 2" evidence="22">
    <location>
        <begin position="166"/>
        <end position="168"/>
    </location>
</feature>
<feature type="short sequence motif" description="SVSE motif" evidence="2">
    <location>
        <begin position="347"/>
        <end position="350"/>
    </location>
</feature>
<feature type="short sequence motif" description="WWDYG motif" evidence="22">
    <location>
        <begin position="516"/>
        <end position="520"/>
    </location>
</feature>
<feature type="short sequence motif" description="DK motif" evidence="22">
    <location>
        <begin position="583"/>
        <end position="590"/>
    </location>
</feature>
<feature type="binding site" evidence="1">
    <location>
        <position position="47"/>
    </location>
    <ligand>
        <name>Mn(2+)</name>
        <dbReference type="ChEBI" id="CHEBI:29035"/>
    </ligand>
</feature>
<feature type="binding site" evidence="1">
    <location>
        <position position="166"/>
    </location>
    <ligand>
        <name>Mn(2+)</name>
        <dbReference type="ChEBI" id="CHEBI:29035"/>
    </ligand>
</feature>
<feature type="binding site" evidence="1">
    <location>
        <position position="168"/>
    </location>
    <ligand>
        <name>Mn(2+)</name>
        <dbReference type="ChEBI" id="CHEBI:29035"/>
    </ligand>
</feature>
<feature type="binding site" evidence="1">
    <location>
        <position position="404"/>
    </location>
    <ligand>
        <name>dolichyl diphosphooligosaccharide</name>
        <dbReference type="ChEBI" id="CHEBI:57570"/>
    </ligand>
</feature>
<feature type="binding site" evidence="1">
    <location>
        <position position="521"/>
    </location>
    <ligand>
        <name>dolichyl diphosphooligosaccharide</name>
        <dbReference type="ChEBI" id="CHEBI:57570"/>
    </ligand>
</feature>
<feature type="site" description="Interacts with target acceptor peptide in protein substrate" evidence="1">
    <location>
        <position position="47"/>
    </location>
</feature>
<feature type="site" description="Important for catalytic activity" evidence="1">
    <location>
        <position position="159"/>
    </location>
</feature>
<feature type="site" description="Interacts with target acceptor peptide in protein substrate" evidence="1">
    <location>
        <position position="350"/>
    </location>
</feature>
<feature type="site" description="Interacts with target acceptor peptide in protein substrate" evidence="1">
    <location>
        <position position="586"/>
    </location>
</feature>
<feature type="glycosylation site" description="N-linked (GlcNAc...) asparagine" evidence="4">
    <location>
        <position position="60"/>
    </location>
</feature>
<feature type="glycosylation site" description="N-linked (GlcNAc...) asparagine" evidence="4">
    <location>
        <position position="535"/>
    </location>
</feature>
<feature type="glycosylation site" description="N-linked (GlcNAc...) (high mannose) asparagine" evidence="16">
    <location>
        <position position="539"/>
    </location>
</feature>
<feature type="mutagenesis site" description="Lethal; impairs the catalytic activity." evidence="16">
    <original>D</original>
    <variation>A</variation>
    <location>
        <position position="47"/>
    </location>
</feature>
<feature type="mutagenesis site" description="Temperature sensitive and staurosporine sensitive." evidence="11">
    <original>R</original>
    <variation>A</variation>
    <location>
        <position position="159"/>
    </location>
</feature>
<feature type="mutagenesis site" description="Temperature sensitive and staurosporine sensitive." evidence="11">
    <original>S</original>
    <variation>A</variation>
    <location>
        <position position="160"/>
    </location>
</feature>
<feature type="mutagenesis site" description="Temperature sensitive and staurosporine sensitive.">
    <original>G</original>
    <variation>R</variation>
    <location>
        <position position="163"/>
    </location>
</feature>
<feature type="mutagenesis site" description="Temperature sensitive and staurosporine sensitive." evidence="11">
    <original>S</original>
    <variation>A</variation>
    <location>
        <position position="164"/>
    </location>
</feature>
<feature type="mutagenesis site" description="Lethal; impairs the catalytic activity." evidence="16">
    <original>D</original>
    <variation>A</variation>
    <location>
        <position position="166"/>
    </location>
</feature>
<feature type="mutagenesis site" description="Lethal; impairs the catalytic activity." evidence="16">
    <original>E</original>
    <variation>Q</variation>
    <location>
        <position position="168"/>
    </location>
</feature>
<feature type="mutagenesis site" description="Lethal; abolishes interaction with OST1 and WBP1." evidence="11">
    <original>W</original>
    <variation>A</variation>
    <location>
        <position position="208"/>
    </location>
</feature>
<feature type="mutagenesis site" description="Temperature sensitive and staurosporine sensitive." evidence="11">
    <original>G</original>
    <variation>D</variation>
    <location>
        <position position="210"/>
    </location>
</feature>
<feature type="mutagenesis site" description="Lethal; impairs the catalytic activity." evidence="16">
    <original>E</original>
    <variation>A</variation>
    <location>
        <position position="350"/>
    </location>
</feature>
<feature type="mutagenesis site" description="Staurosporine sensitive." evidence="11">
    <original>V</original>
    <variation>I</variation>
    <location>
        <position position="393"/>
    </location>
</feature>
<feature type="mutagenesis site" description="Lethal; abolishes interaction with OST1 and WBP1." evidence="11 16">
    <original>R</original>
    <variation>A</variation>
    <location>
        <position position="404"/>
    </location>
</feature>
<feature type="mutagenesis site" description="Lethal; greatly reduces amount of OST1 in complex.">
    <original>WWDY</original>
    <variation>AAAA</variation>
    <location>
        <begin position="516"/>
        <end position="519"/>
    </location>
</feature>
<feature type="mutagenesis site" description="Temperature-sensitive." evidence="8">
    <original>W</original>
    <variation>A</variation>
    <location>
        <position position="516"/>
    </location>
</feature>
<feature type="mutagenesis site" description="Lethal." evidence="8">
    <original>W</original>
    <variation>A</variation>
    <location>
        <position position="517"/>
    </location>
</feature>
<feature type="mutagenesis site" description="Lethal." evidence="8">
    <original>D</original>
    <variation>A</variation>
    <location>
        <position position="518"/>
    </location>
</feature>
<feature type="mutagenesis site" description="Temperature-sensitive." evidence="8">
    <original>Y</original>
    <variation>A</variation>
    <location>
        <position position="519"/>
    </location>
</feature>
<feature type="mutagenesis site" description="Temperature-sensitive." evidence="8">
    <original>G</original>
    <variation>D</variation>
    <location>
        <position position="520"/>
    </location>
</feature>
<feature type="mutagenesis site" description="Temperature-sensitive; reduces amount of OST1 in complex.">
    <original>EEK</original>
    <variation>AAA</variation>
    <location>
        <begin position="554"/>
        <end position="556"/>
    </location>
</feature>
<feature type="mutagenesis site" description="Temperature sensitive." evidence="16">
    <original>K</original>
    <variation>A</variation>
    <location>
        <position position="586"/>
    </location>
</feature>
<feature type="mutagenesis site" description="Lethal; reduces glycosylation; greatly reduces amount of OST1 in complex.">
    <original>RIS</original>
    <variation>AAA</variation>
    <location>
        <begin position="592"/>
        <end position="594"/>
    </location>
</feature>
<feature type="mutagenesis site" description="Temperature-sensitive." evidence="8">
    <original>I</original>
    <variation>D</variation>
    <location>
        <position position="593"/>
    </location>
</feature>
<feature type="helix" evidence="29">
    <location>
        <begin position="8"/>
        <end position="32"/>
    </location>
</feature>
<feature type="helix" evidence="29">
    <location>
        <begin position="34"/>
        <end position="38"/>
    </location>
</feature>
<feature type="helix" evidence="29">
    <location>
        <begin position="47"/>
        <end position="60"/>
    </location>
</feature>
<feature type="helix" evidence="29">
    <location>
        <begin position="63"/>
        <end position="67"/>
    </location>
</feature>
<feature type="strand" evidence="29">
    <location>
        <begin position="70"/>
        <end position="75"/>
    </location>
</feature>
<feature type="turn" evidence="29">
    <location>
        <begin position="76"/>
        <end position="78"/>
    </location>
</feature>
<feature type="strand" evidence="25">
    <location>
        <begin position="80"/>
        <end position="82"/>
    </location>
</feature>
<feature type="strand" evidence="29">
    <location>
        <begin position="83"/>
        <end position="86"/>
    </location>
</feature>
<feature type="helix" evidence="29">
    <location>
        <begin position="89"/>
        <end position="103"/>
    </location>
</feature>
<feature type="strand" evidence="27">
    <location>
        <begin position="104"/>
        <end position="106"/>
    </location>
</feature>
<feature type="helix" evidence="29">
    <location>
        <begin position="111"/>
        <end position="116"/>
    </location>
</feature>
<feature type="helix" evidence="29">
    <location>
        <begin position="118"/>
        <end position="137"/>
    </location>
</feature>
<feature type="helix" evidence="29">
    <location>
        <begin position="140"/>
        <end position="152"/>
    </location>
</feature>
<feature type="helix" evidence="29">
    <location>
        <begin position="154"/>
        <end position="157"/>
    </location>
</feature>
<feature type="strand" evidence="26">
    <location>
        <begin position="158"/>
        <end position="160"/>
    </location>
</feature>
<feature type="helix" evidence="29">
    <location>
        <begin position="168"/>
        <end position="188"/>
    </location>
</feature>
<feature type="helix" evidence="29">
    <location>
        <begin position="191"/>
        <end position="207"/>
    </location>
</feature>
<feature type="helix" evidence="29">
    <location>
        <begin position="211"/>
        <end position="227"/>
    </location>
</feature>
<feature type="helix" evidence="29">
    <location>
        <begin position="233"/>
        <end position="250"/>
    </location>
</feature>
<feature type="turn" evidence="29">
    <location>
        <begin position="254"/>
        <end position="258"/>
    </location>
</feature>
<feature type="helix" evidence="29">
    <location>
        <begin position="259"/>
        <end position="262"/>
    </location>
</feature>
<feature type="helix" evidence="29">
    <location>
        <begin position="264"/>
        <end position="266"/>
    </location>
</feature>
<feature type="helix" evidence="29">
    <location>
        <begin position="267"/>
        <end position="288"/>
    </location>
</feature>
<feature type="helix" evidence="28">
    <location>
        <begin position="294"/>
        <end position="319"/>
    </location>
</feature>
<feature type="strand" evidence="28">
    <location>
        <begin position="321"/>
        <end position="323"/>
    </location>
</feature>
<feature type="turn" evidence="28">
    <location>
        <begin position="327"/>
        <end position="333"/>
    </location>
</feature>
<feature type="helix" evidence="28">
    <location>
        <begin position="337"/>
        <end position="340"/>
    </location>
</feature>
<feature type="turn" evidence="29">
    <location>
        <begin position="345"/>
        <end position="347"/>
    </location>
</feature>
<feature type="helix" evidence="29">
    <location>
        <begin position="349"/>
        <end position="351"/>
    </location>
</feature>
<feature type="helix" evidence="29">
    <location>
        <begin position="357"/>
        <end position="362"/>
    </location>
</feature>
<feature type="strand" evidence="29">
    <location>
        <begin position="363"/>
        <end position="365"/>
    </location>
</feature>
<feature type="helix" evidence="29">
    <location>
        <begin position="366"/>
        <end position="378"/>
    </location>
</feature>
<feature type="helix" evidence="29">
    <location>
        <begin position="383"/>
        <end position="401"/>
    </location>
</feature>
<feature type="helix" evidence="29">
    <location>
        <begin position="403"/>
        <end position="405"/>
    </location>
</feature>
<feature type="helix" evidence="29">
    <location>
        <begin position="406"/>
        <end position="428"/>
    </location>
</feature>
<feature type="helix" evidence="29">
    <location>
        <begin position="442"/>
        <end position="472"/>
    </location>
</feature>
<feature type="turn" evidence="28">
    <location>
        <begin position="473"/>
        <end position="475"/>
    </location>
</feature>
<feature type="strand" evidence="29">
    <location>
        <begin position="478"/>
        <end position="481"/>
    </location>
</feature>
<feature type="helix" evidence="29">
    <location>
        <begin position="496"/>
        <end position="505"/>
    </location>
</feature>
<feature type="strand" evidence="24">
    <location>
        <begin position="508"/>
        <end position="510"/>
    </location>
</feature>
<feature type="strand" evidence="29">
    <location>
        <begin position="512"/>
        <end position="514"/>
    </location>
</feature>
<feature type="helix" evidence="29">
    <location>
        <begin position="517"/>
        <end position="519"/>
    </location>
</feature>
<feature type="helix" evidence="29">
    <location>
        <begin position="520"/>
        <end position="526"/>
    </location>
</feature>
<feature type="strand" evidence="29">
    <location>
        <begin position="530"/>
        <end position="532"/>
    </location>
</feature>
<feature type="helix" evidence="29">
    <location>
        <begin position="540"/>
        <end position="549"/>
    </location>
</feature>
<feature type="strand" evidence="28">
    <location>
        <begin position="551"/>
        <end position="553"/>
    </location>
</feature>
<feature type="helix" evidence="29">
    <location>
        <begin position="554"/>
        <end position="563"/>
    </location>
</feature>
<feature type="strand" evidence="29">
    <location>
        <begin position="568"/>
        <end position="572"/>
    </location>
</feature>
<feature type="turn" evidence="29">
    <location>
        <begin position="575"/>
        <end position="578"/>
    </location>
</feature>
<feature type="strand" evidence="29">
    <location>
        <begin position="580"/>
        <end position="582"/>
    </location>
</feature>
<feature type="helix" evidence="29">
    <location>
        <begin position="583"/>
        <end position="597"/>
    </location>
</feature>
<feature type="turn" evidence="29">
    <location>
        <begin position="599"/>
        <end position="601"/>
    </location>
</feature>
<feature type="helix" evidence="29">
    <location>
        <begin position="604"/>
        <end position="607"/>
    </location>
</feature>
<feature type="strand" evidence="26">
    <location>
        <begin position="610"/>
        <end position="612"/>
    </location>
</feature>
<feature type="strand" evidence="27">
    <location>
        <begin position="617"/>
        <end position="619"/>
    </location>
</feature>
<feature type="helix" evidence="29">
    <location>
        <begin position="622"/>
        <end position="625"/>
    </location>
</feature>
<feature type="helix" evidence="29">
    <location>
        <begin position="628"/>
        <end position="633"/>
    </location>
</feature>
<feature type="strand" evidence="27">
    <location>
        <begin position="634"/>
        <end position="636"/>
    </location>
</feature>
<feature type="helix" evidence="29">
    <location>
        <begin position="638"/>
        <end position="640"/>
    </location>
</feature>
<feature type="turn" evidence="28">
    <location>
        <begin position="642"/>
        <end position="644"/>
    </location>
</feature>
<feature type="strand" evidence="26">
    <location>
        <begin position="645"/>
        <end position="647"/>
    </location>
</feature>
<feature type="turn" evidence="29">
    <location>
        <begin position="649"/>
        <end position="651"/>
    </location>
</feature>
<feature type="turn" evidence="29">
    <location>
        <begin position="657"/>
        <end position="659"/>
    </location>
</feature>
<feature type="strand" evidence="29">
    <location>
        <begin position="664"/>
        <end position="671"/>
    </location>
</feature>
<feature type="strand" evidence="29">
    <location>
        <begin position="677"/>
        <end position="682"/>
    </location>
</feature>
<feature type="helix" evidence="29">
    <location>
        <begin position="692"/>
        <end position="699"/>
    </location>
</feature>
<feature type="strand" evidence="24">
    <location>
        <begin position="705"/>
        <end position="708"/>
    </location>
</feature>
<feature type="strand" evidence="24">
    <location>
        <begin position="712"/>
        <end position="716"/>
    </location>
</feature>
<gene>
    <name type="primary">STT3</name>
    <name type="ordered locus">YGL022W</name>
</gene>
<evidence type="ECO:0000250" key="1">
    <source>
        <dbReference type="UniProtKB" id="B9KDD4"/>
    </source>
</evidence>
<evidence type="ECO:0000250" key="2">
    <source>
        <dbReference type="UniProtKB" id="Q5HTX9"/>
    </source>
</evidence>
<evidence type="ECO:0000255" key="3"/>
<evidence type="ECO:0000255" key="4">
    <source>
        <dbReference type="PROSITE-ProRule" id="PRU00498"/>
    </source>
</evidence>
<evidence type="ECO:0000256" key="5">
    <source>
        <dbReference type="SAM" id="MobiDB-lite"/>
    </source>
</evidence>
<evidence type="ECO:0000269" key="6">
    <source>
    </source>
</evidence>
<evidence type="ECO:0000269" key="7">
    <source>
    </source>
</evidence>
<evidence type="ECO:0000269" key="8">
    <source>
    </source>
</evidence>
<evidence type="ECO:0000269" key="9">
    <source>
    </source>
</evidence>
<evidence type="ECO:0000269" key="10">
    <source>
    </source>
</evidence>
<evidence type="ECO:0000269" key="11">
    <source>
    </source>
</evidence>
<evidence type="ECO:0000269" key="12">
    <source>
    </source>
</evidence>
<evidence type="ECO:0000269" key="13">
    <source>
    </source>
</evidence>
<evidence type="ECO:0000269" key="14">
    <source>
    </source>
</evidence>
<evidence type="ECO:0000269" key="15">
    <source>
    </source>
</evidence>
<evidence type="ECO:0000269" key="16">
    <source>
    </source>
</evidence>
<evidence type="ECO:0000269" key="17">
    <source>
    </source>
</evidence>
<evidence type="ECO:0000269" key="18">
    <source>
    </source>
</evidence>
<evidence type="ECO:0000269" key="19">
    <source>
    </source>
</evidence>
<evidence type="ECO:0000305" key="20"/>
<evidence type="ECO:0000305" key="21">
    <source>
    </source>
</evidence>
<evidence type="ECO:0000305" key="22">
    <source>
    </source>
</evidence>
<evidence type="ECO:0000305" key="23">
    <source>
    </source>
</evidence>
<evidence type="ECO:0007829" key="24">
    <source>
        <dbReference type="PDB" id="2LGZ"/>
    </source>
</evidence>
<evidence type="ECO:0007829" key="25">
    <source>
        <dbReference type="PDB" id="6C26"/>
    </source>
</evidence>
<evidence type="ECO:0007829" key="26">
    <source>
        <dbReference type="PDB" id="6EZN"/>
    </source>
</evidence>
<evidence type="ECO:0007829" key="27">
    <source>
        <dbReference type="PDB" id="7OCI"/>
    </source>
</evidence>
<evidence type="ECO:0007829" key="28">
    <source>
        <dbReference type="PDB" id="8AGC"/>
    </source>
</evidence>
<evidence type="ECO:0007829" key="29">
    <source>
        <dbReference type="PDB" id="8AGE"/>
    </source>
</evidence>
<sequence length="718" mass="81529">MGSDRSCVLSVFQTILKLVIFVAIFGAAISSRLFAVIKFESIIHEFDPWFNYRATKYLVNNSFYKFLNWFDDRTWYPLGRVTGGTLYPGLMTTSAFIWHALRNWLGLPIDIRNVCVLFAPLFSGVTAWATYEFTKEIKDASAGLLAAGFIAIVPGYISRSVAGSYDNEAIAITLLMVTFMFWIKAQKTGSIMHATCAALFYFYMVSAWGGYVFITNLIPLHVFLLILMGRYSSKLYSAYTTWYAIGTVASMQIPFVGFLPIRSNDHMAALGVFGLIQIVAFGDFVKGQISTAKFKVIMMVSLFLILVLGVVGLSALTYMGLIAPWTGRFYSLWDTNYAKIHIPIIASVSEHQPVSWPAFFFDTHFLIWLFPAGVFLLFLDLKDEHVFVIAYSVLCSYFAGVMVRLMLTLTPVICVSAAVALSKIFDIYLDFKTSDRKYAIKPAALLAKLIVSGSFIFYLYLFVFHSTWVTRTAYSSPSVVLPSQTPDGKLALIDDFREAYYWLRMNSDEDSKVAAWWDYGYQIGGMADRTTLVDNNTWNNTHIAIVGKAMASPEEKSYEILKEHDVDYVLVIFGGLIGFGGDDINKFLWMIRISEGIWPEEIKERDFYTAEGEYRVDARASETMRNSLLYKMSYKDFPQLFNGGQATDRVRQQMITPLDVPPLDYFDEVFTSENWMVRIYQLKKDDAQGRTLRDVGELTRSSTKTRRSIKRPELGLRV</sequence>
<accession>P39007</accession>
<accession>D6VUB5</accession>
<protein>
    <recommendedName>
        <fullName>Dolichyl-diphosphooligosaccharide--protein glycosyltransferase subunit STT3</fullName>
        <shortName>Oligosaccharyl transferase subunit STT3</shortName>
        <ecNumber>2.4.99.18</ecNumber>
    </recommendedName>
    <alternativeName>
        <fullName>Staurosporine and temperature sensitivity protein 3</fullName>
    </alternativeName>
</protein>
<organism>
    <name type="scientific">Saccharomyces cerevisiae (strain ATCC 204508 / S288c)</name>
    <name type="common">Baker's yeast</name>
    <dbReference type="NCBI Taxonomy" id="559292"/>
    <lineage>
        <taxon>Eukaryota</taxon>
        <taxon>Fungi</taxon>
        <taxon>Dikarya</taxon>
        <taxon>Ascomycota</taxon>
        <taxon>Saccharomycotina</taxon>
        <taxon>Saccharomycetes</taxon>
        <taxon>Saccharomycetales</taxon>
        <taxon>Saccharomycetaceae</taxon>
        <taxon>Saccharomyces</taxon>
    </lineage>
</organism>
<keyword id="KW-0002">3D-structure</keyword>
<keyword id="KW-0256">Endoplasmic reticulum</keyword>
<keyword id="KW-0325">Glycoprotein</keyword>
<keyword id="KW-0328">Glycosyltransferase</keyword>
<keyword id="KW-0460">Magnesium</keyword>
<keyword id="KW-0464">Manganese</keyword>
<keyword id="KW-0472">Membrane</keyword>
<keyword id="KW-0479">Metal-binding</keyword>
<keyword id="KW-1185">Reference proteome</keyword>
<keyword id="KW-0808">Transferase</keyword>
<keyword id="KW-0812">Transmembrane</keyword>
<keyword id="KW-1133">Transmembrane helix</keyword>
<comment type="function">
    <text evidence="8 16">Catalytic subunit of the oligosaccharyl transferase (OST) complex that catalyzes the initial transfer of a defined glycan (Glc(3)Man(9)GlcNAc(2) in eukaryotes) from the lipid carrier dolichol-pyrophosphate to an asparagine residue within an Asn-X-Ser/Thr consensus motif in nascent polypeptide chains, the first step in protein N-glycosylation. N-glycosylation occurs cotranslationally and the complex associates with the Sec61 complex at the channel-forming translocon complex that mediates protein translocation across the endoplasmic reticulum (ER). All subunits are required for a maximal enzyme activity (PubMed:12359722). This subunit contains the active site and the acceptor peptide and donor lipid-linked oligosaccharide (LLO) binding pockets (PubMed:29301962).</text>
</comment>
<comment type="catalytic activity">
    <reaction evidence="7">
        <text>a di-trans,poly-cis-dolichyl diphosphooligosaccharide + L-asparaginyl-[protein] = N(4)-(oligosaccharide-(1-&gt;4)-N-acetyl-beta-D-glucosaminyl-(1-&gt;4)-N-acetyl-beta-D-glucosaminyl)-L-asparaginyl-[protein] + a di-trans,poly-cis-dolichyl diphosphate + H(+)</text>
        <dbReference type="Rhea" id="RHEA:22980"/>
        <dbReference type="Rhea" id="RHEA-COMP:12804"/>
        <dbReference type="Rhea" id="RHEA-COMP:12805"/>
        <dbReference type="Rhea" id="RHEA-COMP:19506"/>
        <dbReference type="Rhea" id="RHEA-COMP:19509"/>
        <dbReference type="ChEBI" id="CHEBI:15378"/>
        <dbReference type="ChEBI" id="CHEBI:50347"/>
        <dbReference type="ChEBI" id="CHEBI:57497"/>
        <dbReference type="ChEBI" id="CHEBI:57570"/>
        <dbReference type="ChEBI" id="CHEBI:132529"/>
        <dbReference type="EC" id="2.4.99.18"/>
    </reaction>
</comment>
<comment type="cofactor">
    <cofactor evidence="1">
        <name>Mg(2+)</name>
        <dbReference type="ChEBI" id="CHEBI:18420"/>
    </cofactor>
    <cofactor evidence="1">
        <name>Mn(2+)</name>
        <dbReference type="ChEBI" id="CHEBI:29035"/>
    </cofactor>
</comment>
<comment type="biophysicochemical properties">
    <kinetics>
        <KM evidence="7">21.3 uM for an Asn-Tyr-Thr tripeptide</KM>
        <KM evidence="7">0.094 uM for Glc(3)Man(9)GlcNAc(2)-PP-Dol</KM>
        <text evidence="16">Glycosylates at a rate of 3.5 peptides per minute per OST.</text>
    </kinetics>
</comment>
<comment type="pathway">
    <text evidence="21">Protein modification; protein glycosylation.</text>
</comment>
<comment type="subunit">
    <text evidence="6 12 13 14 15 16 18 19">Component of the oligosaccharyltransferase (OST) complex, which appears to exist in two assemblies comprising OST1, OST2, OST4, OST5, STT3, SWP1, WPB1, and either OST3 or OST6 (PubMed:10677492, PubMed:15831493, PubMed:15886282, PubMed:16096345, PubMed:16297388, PubMed:29301962, PubMed:9405463, PubMed:9435788). OST assembly occurs through the formation of 3 subcomplexes. Subcomplex 1 contains OST1 and OST5, subcomplex 2 contains STT3, OST3, and OST4, and subcomplex 3 contains OST2, WBP1, and SWP1 (PubMed:29301962). Interacts with SEC61 (PubMed:15831493).</text>
</comment>
<comment type="interaction">
    <interactant intactId="EBI-18447">
        <id>P39007</id>
    </interactant>
    <interactant intactId="EBI-12680">
        <id>P48439</id>
        <label>OST3</label>
    </interactant>
    <organismsDiffer>false</organismsDiffer>
    <experiments>2</experiments>
</comment>
<comment type="interaction">
    <interactant intactId="EBI-18447">
        <id>P39007</id>
    </interactant>
    <interactant intactId="EBI-12689">
        <id>Q99380</id>
        <label>OST4</label>
    </interactant>
    <organismsDiffer>false</organismsDiffer>
    <experiments>7</experiments>
</comment>
<comment type="interaction">
    <interactant intactId="EBI-18447">
        <id>P39007</id>
    </interactant>
    <interactant intactId="EBI-16400">
        <id>P32915</id>
        <label>SEC61</label>
    </interactant>
    <organismsDiffer>false</organismsDiffer>
    <experiments>2</experiments>
</comment>
<comment type="interaction">
    <interactant intactId="EBI-18447">
        <id>P39007</id>
    </interactant>
    <interactant intactId="EBI-12658">
        <id>P33767</id>
        <label>WBP1</label>
    </interactant>
    <organismsDiffer>false</organismsDiffer>
    <experiments>3</experiments>
</comment>
<comment type="subcellular location">
    <subcellularLocation>
        <location evidence="9">Endoplasmic reticulum membrane</location>
        <topology evidence="16">Multi-pass membrane protein</topology>
    </subcellularLocation>
</comment>
<comment type="domain">
    <text evidence="22">Despite low primary sequence conservation between eukaryotic catalytic subunits and bacterial and archaeal single subunit OSTs (ssOST), structural comparison revealed several common motifs at spatially equivalent positions, like the DXD motif 1 on the external loop 1 and the DXD motif 2 on the external loop 2 involved in binding of the metal ion cofactor and the carboxamide group of the acceptor asparagine, the conserved Glu residue of the TIXE/SVSE motif on the external loop 5 involved in catalysis, as well as the WWDYG and the DK/MI motifs in the globular domain that define the binding pocket for the +2 Ser/Thr of the acceptor sequon. In bacterial ssOSTs, an Arg residue was found to interact with a negatively charged side chain at the -2 position of the sequon. This Arg is conserved in bacterial enzymes and correlates with an extended sequon requirement (Asp-X-Asn-X-Ser/Thr) for bacterial N-glycosylation.</text>
</comment>
<comment type="miscellaneous">
    <text evidence="10">Present with 3000 molecules/cell in log phase SD medium.</text>
</comment>
<comment type="similarity">
    <text evidence="20">Belongs to the STT3 family.</text>
</comment>
<dbReference type="EC" id="2.4.99.18"/>
<dbReference type="EMBL" id="D28952">
    <property type="protein sequence ID" value="BAA06079.1"/>
    <property type="molecule type" value="Genomic_DNA"/>
</dbReference>
<dbReference type="EMBL" id="Z72544">
    <property type="protein sequence ID" value="CAA96722.1"/>
    <property type="molecule type" value="Genomic_DNA"/>
</dbReference>
<dbReference type="EMBL" id="BK006941">
    <property type="protein sequence ID" value="DAA08076.1"/>
    <property type="molecule type" value="Genomic_DNA"/>
</dbReference>
<dbReference type="PIR" id="S64024">
    <property type="entry name" value="S64024"/>
</dbReference>
<dbReference type="RefSeq" id="NP_011493.1">
    <property type="nucleotide sequence ID" value="NM_001180887.1"/>
</dbReference>
<dbReference type="PDB" id="2LGZ">
    <property type="method" value="NMR"/>
    <property type="chains" value="A=465-718"/>
</dbReference>
<dbReference type="PDB" id="6C26">
    <property type="method" value="EM"/>
    <property type="resolution" value="3.50 A"/>
    <property type="chains" value="A=1-718"/>
</dbReference>
<dbReference type="PDB" id="6EZN">
    <property type="method" value="EM"/>
    <property type="resolution" value="3.30 A"/>
    <property type="chains" value="F=1-718"/>
</dbReference>
<dbReference type="PDB" id="7OCI">
    <property type="method" value="EM"/>
    <property type="resolution" value="3.46 A"/>
    <property type="chains" value="F=1-718"/>
</dbReference>
<dbReference type="PDB" id="8AGB">
    <property type="method" value="EM"/>
    <property type="resolution" value="3.00 A"/>
    <property type="chains" value="A=1-718"/>
</dbReference>
<dbReference type="PDB" id="8AGC">
    <property type="method" value="EM"/>
    <property type="resolution" value="3.10 A"/>
    <property type="chains" value="A=1-718"/>
</dbReference>
<dbReference type="PDB" id="8AGE">
    <property type="method" value="EM"/>
    <property type="resolution" value="2.80 A"/>
    <property type="chains" value="A=1-718"/>
</dbReference>
<dbReference type="PDBsum" id="2LGZ"/>
<dbReference type="PDBsum" id="6C26"/>
<dbReference type="PDBsum" id="6EZN"/>
<dbReference type="PDBsum" id="7OCI"/>
<dbReference type="PDBsum" id="8AGB"/>
<dbReference type="PDBsum" id="8AGC"/>
<dbReference type="PDBsum" id="8AGE"/>
<dbReference type="BMRB" id="P39007"/>
<dbReference type="EMDB" id="EMD-12808"/>
<dbReference type="EMDB" id="EMD-15419"/>
<dbReference type="EMDB" id="EMD-15421"/>
<dbReference type="EMDB" id="EMD-4161"/>
<dbReference type="EMDB" id="EMD-7336"/>
<dbReference type="SMR" id="P39007"/>
<dbReference type="BioGRID" id="33224">
    <property type="interactions" value="669"/>
</dbReference>
<dbReference type="ComplexPortal" id="CPX-1638">
    <property type="entry name" value="Oligosaccharyltransferase complex, OST6 variant"/>
</dbReference>
<dbReference type="ComplexPortal" id="CPX-1639">
    <property type="entry name" value="Oligosaccharyltransferase complex, OST3 variant"/>
</dbReference>
<dbReference type="DIP" id="DIP-2459N"/>
<dbReference type="FunCoup" id="P39007">
    <property type="interactions" value="1206"/>
</dbReference>
<dbReference type="IntAct" id="P39007">
    <property type="interactions" value="34"/>
</dbReference>
<dbReference type="MINT" id="P39007"/>
<dbReference type="STRING" id="4932.YGL022W"/>
<dbReference type="CAZy" id="GT66">
    <property type="family name" value="Glycosyltransferase Family 66"/>
</dbReference>
<dbReference type="TCDB" id="9.B.142.3.14">
    <property type="family name" value="the integral membrane glycosyltransferase family 39 (gt39) family"/>
</dbReference>
<dbReference type="GlyCosmos" id="P39007">
    <property type="glycosylation" value="3 sites, No reported glycans"/>
</dbReference>
<dbReference type="GlyGen" id="P39007">
    <property type="glycosylation" value="3 sites"/>
</dbReference>
<dbReference type="iPTMnet" id="P39007"/>
<dbReference type="PaxDb" id="4932-YGL022W"/>
<dbReference type="PeptideAtlas" id="P39007"/>
<dbReference type="EnsemblFungi" id="YGL022W_mRNA">
    <property type="protein sequence ID" value="YGL022W"/>
    <property type="gene ID" value="YGL022W"/>
</dbReference>
<dbReference type="GeneID" id="852862"/>
<dbReference type="KEGG" id="sce:YGL022W"/>
<dbReference type="AGR" id="SGD:S000002990"/>
<dbReference type="SGD" id="S000002990">
    <property type="gene designation" value="STT3"/>
</dbReference>
<dbReference type="VEuPathDB" id="FungiDB:YGL022W"/>
<dbReference type="eggNOG" id="KOG2292">
    <property type="taxonomic scope" value="Eukaryota"/>
</dbReference>
<dbReference type="GeneTree" id="ENSGT00940000155488"/>
<dbReference type="HOGENOM" id="CLU_009279_1_0_1"/>
<dbReference type="InParanoid" id="P39007"/>
<dbReference type="OMA" id="TWYAIGT"/>
<dbReference type="OrthoDB" id="10261066at2759"/>
<dbReference type="BioCyc" id="MetaCyc:YGL022W-MONOMER"/>
<dbReference type="BioCyc" id="YEAST:YGL022W-MONOMER"/>
<dbReference type="BRENDA" id="2.4.99.18">
    <property type="organism ID" value="984"/>
</dbReference>
<dbReference type="UniPathway" id="UPA00378"/>
<dbReference type="BioGRID-ORCS" id="852862">
    <property type="hits" value="6 hits in 10 CRISPR screens"/>
</dbReference>
<dbReference type="EvolutionaryTrace" id="P39007"/>
<dbReference type="PRO" id="PR:P39007"/>
<dbReference type="Proteomes" id="UP000002311">
    <property type="component" value="Chromosome VII"/>
</dbReference>
<dbReference type="RNAct" id="P39007">
    <property type="molecule type" value="protein"/>
</dbReference>
<dbReference type="GO" id="GO:0005783">
    <property type="term" value="C:endoplasmic reticulum"/>
    <property type="evidence" value="ECO:0007005"/>
    <property type="project" value="SGD"/>
</dbReference>
<dbReference type="GO" id="GO:0005789">
    <property type="term" value="C:endoplasmic reticulum membrane"/>
    <property type="evidence" value="ECO:0000303"/>
    <property type="project" value="ComplexPortal"/>
</dbReference>
<dbReference type="GO" id="GO:0008250">
    <property type="term" value="C:oligosaccharyltransferase complex"/>
    <property type="evidence" value="ECO:0000314"/>
    <property type="project" value="SGD"/>
</dbReference>
<dbReference type="GO" id="GO:0004579">
    <property type="term" value="F:dolichyl-diphosphooligosaccharide-protein glycotransferase activity"/>
    <property type="evidence" value="ECO:0000318"/>
    <property type="project" value="GO_Central"/>
</dbReference>
<dbReference type="GO" id="GO:0046872">
    <property type="term" value="F:metal ion binding"/>
    <property type="evidence" value="ECO:0007669"/>
    <property type="project" value="UniProtKB-KW"/>
</dbReference>
<dbReference type="GO" id="GO:0043687">
    <property type="term" value="P:post-translational protein modification"/>
    <property type="evidence" value="ECO:0000318"/>
    <property type="project" value="GO_Central"/>
</dbReference>
<dbReference type="GO" id="GO:0006487">
    <property type="term" value="P:protein N-linked glycosylation"/>
    <property type="evidence" value="ECO:0000353"/>
    <property type="project" value="SGD"/>
</dbReference>
<dbReference type="GO" id="GO:0018279">
    <property type="term" value="P:protein N-linked glycosylation via asparagine"/>
    <property type="evidence" value="ECO:0000318"/>
    <property type="project" value="GO_Central"/>
</dbReference>
<dbReference type="DisProt" id="DP01195"/>
<dbReference type="FunFam" id="3.40.50.12610:FF:000001">
    <property type="entry name" value="Dolichyl-diphosphooligosaccharide--protein glycosyltransferase subunit STT3B"/>
    <property type="match status" value="1"/>
</dbReference>
<dbReference type="Gene3D" id="3.40.50.12610">
    <property type="match status" value="1"/>
</dbReference>
<dbReference type="InterPro" id="IPR003674">
    <property type="entry name" value="Oligo_trans_STT3"/>
</dbReference>
<dbReference type="InterPro" id="IPR048999">
    <property type="entry name" value="STT3-PglB_core"/>
</dbReference>
<dbReference type="InterPro" id="IPR048307">
    <property type="entry name" value="STT3_N"/>
</dbReference>
<dbReference type="PANTHER" id="PTHR13872">
    <property type="entry name" value="DOLICHYL-DIPHOSPHOOLIGOSACCHARIDE--PROTEIN GLYCOSYLTRANSFERASE SUBUNIT"/>
    <property type="match status" value="1"/>
</dbReference>
<dbReference type="PANTHER" id="PTHR13872:SF1">
    <property type="entry name" value="DOLICHYL-DIPHOSPHOOLIGOSACCHARIDE--PROTEIN GLYCOSYLTRANSFERASE SUBUNIT STT3B"/>
    <property type="match status" value="1"/>
</dbReference>
<dbReference type="Pfam" id="PF02516">
    <property type="entry name" value="STT3"/>
    <property type="match status" value="1"/>
</dbReference>
<dbReference type="Pfam" id="PF21436">
    <property type="entry name" value="STT3-PglB_core"/>
    <property type="match status" value="1"/>
</dbReference>
<reference key="1">
    <citation type="journal article" date="1995" name="Gene">
        <title>STT3, a novel essential gene related to the PKC1/STT1 protein kinase pathway, is involved in protein glycosylation in yeast.</title>
        <authorList>
            <person name="Yoshida S."/>
            <person name="Ohya Y."/>
            <person name="Nakano A."/>
            <person name="Anraku Y."/>
        </authorList>
    </citation>
    <scope>NUCLEOTIDE SEQUENCE [GENOMIC DNA]</scope>
    <source>
        <strain>ATCC 204508 / S288c</strain>
    </source>
</reference>
<reference key="2">
    <citation type="journal article" date="1997" name="Nature">
        <title>The nucleotide sequence of Saccharomyces cerevisiae chromosome VII.</title>
        <authorList>
            <person name="Tettelin H."/>
            <person name="Agostoni-Carbone M.L."/>
            <person name="Albermann K."/>
            <person name="Albers M."/>
            <person name="Arroyo J."/>
            <person name="Backes U."/>
            <person name="Barreiros T."/>
            <person name="Bertani I."/>
            <person name="Bjourson A.J."/>
            <person name="Brueckner M."/>
            <person name="Bruschi C.V."/>
            <person name="Carignani G."/>
            <person name="Castagnoli L."/>
            <person name="Cerdan E."/>
            <person name="Clemente M.L."/>
            <person name="Coblenz A."/>
            <person name="Coglievina M."/>
            <person name="Coissac E."/>
            <person name="Defoor E."/>
            <person name="Del Bino S."/>
            <person name="Delius H."/>
            <person name="Delneri D."/>
            <person name="de Wergifosse P."/>
            <person name="Dujon B."/>
            <person name="Durand P."/>
            <person name="Entian K.-D."/>
            <person name="Eraso P."/>
            <person name="Escribano V."/>
            <person name="Fabiani L."/>
            <person name="Fartmann B."/>
            <person name="Feroli F."/>
            <person name="Feuermann M."/>
            <person name="Frontali L."/>
            <person name="Garcia-Gonzalez M."/>
            <person name="Garcia-Saez M.I."/>
            <person name="Goffeau A."/>
            <person name="Guerreiro P."/>
            <person name="Hani J."/>
            <person name="Hansen M."/>
            <person name="Hebling U."/>
            <person name="Hernandez K."/>
            <person name="Heumann K."/>
            <person name="Hilger F."/>
            <person name="Hofmann B."/>
            <person name="Indge K.J."/>
            <person name="James C.M."/>
            <person name="Klima R."/>
            <person name="Koetter P."/>
            <person name="Kramer B."/>
            <person name="Kramer W."/>
            <person name="Lauquin G."/>
            <person name="Leuther H."/>
            <person name="Louis E.J."/>
            <person name="Maillier E."/>
            <person name="Marconi A."/>
            <person name="Martegani E."/>
            <person name="Mazon M.J."/>
            <person name="Mazzoni C."/>
            <person name="McReynolds A.D.K."/>
            <person name="Melchioretto P."/>
            <person name="Mewes H.-W."/>
            <person name="Minenkova O."/>
            <person name="Mueller-Auer S."/>
            <person name="Nawrocki A."/>
            <person name="Netter P."/>
            <person name="Neu R."/>
            <person name="Nombela C."/>
            <person name="Oliver S.G."/>
            <person name="Panzeri L."/>
            <person name="Paoluzi S."/>
            <person name="Plevani P."/>
            <person name="Portetelle D."/>
            <person name="Portillo F."/>
            <person name="Potier S."/>
            <person name="Purnelle B."/>
            <person name="Rieger M."/>
            <person name="Riles L."/>
            <person name="Rinaldi T."/>
            <person name="Robben J."/>
            <person name="Rodrigues-Pousada C."/>
            <person name="Rodriguez-Belmonte E."/>
            <person name="Rodriguez-Torres A.M."/>
            <person name="Rose M."/>
            <person name="Ruzzi M."/>
            <person name="Saliola M."/>
            <person name="Sanchez-Perez M."/>
            <person name="Schaefer B."/>
            <person name="Schaefer M."/>
            <person name="Scharfe M."/>
            <person name="Schmidheini T."/>
            <person name="Schreer A."/>
            <person name="Skala J."/>
            <person name="Souciet J.-L."/>
            <person name="Steensma H.Y."/>
            <person name="Talla E."/>
            <person name="Thierry A."/>
            <person name="Vandenbol M."/>
            <person name="van der Aart Q.J.M."/>
            <person name="Van Dyck L."/>
            <person name="Vanoni M."/>
            <person name="Verhasselt P."/>
            <person name="Voet M."/>
            <person name="Volckaert G."/>
            <person name="Wambutt R."/>
            <person name="Watson M.D."/>
            <person name="Weber N."/>
            <person name="Wedler E."/>
            <person name="Wedler H."/>
            <person name="Wipfli P."/>
            <person name="Wolf K."/>
            <person name="Wright L.F."/>
            <person name="Zaccaria P."/>
            <person name="Zimmermann M."/>
            <person name="Zollner A."/>
            <person name="Kleine K."/>
        </authorList>
    </citation>
    <scope>NUCLEOTIDE SEQUENCE [LARGE SCALE GENOMIC DNA]</scope>
    <source>
        <strain>ATCC 204508 / S288c</strain>
    </source>
</reference>
<reference key="3">
    <citation type="journal article" date="2014" name="G3 (Bethesda)">
        <title>The reference genome sequence of Saccharomyces cerevisiae: Then and now.</title>
        <authorList>
            <person name="Engel S.R."/>
            <person name="Dietrich F.S."/>
            <person name="Fisk D.G."/>
            <person name="Binkley G."/>
            <person name="Balakrishnan R."/>
            <person name="Costanzo M.C."/>
            <person name="Dwight S.S."/>
            <person name="Hitz B.C."/>
            <person name="Karra K."/>
            <person name="Nash R.S."/>
            <person name="Weng S."/>
            <person name="Wong E.D."/>
            <person name="Lloyd P."/>
            <person name="Skrzypek M.S."/>
            <person name="Miyasato S.R."/>
            <person name="Simison M."/>
            <person name="Cherry J.M."/>
        </authorList>
    </citation>
    <scope>GENOME REANNOTATION</scope>
    <source>
        <strain>ATCC 204508 / S288c</strain>
    </source>
</reference>
<reference key="4">
    <citation type="journal article" date="1995" name="EMBO J.">
        <title>STT3, a highly conserved protein required for yeast oligosaccharyl transferase activity in vivo.</title>
        <authorList>
            <person name="Zufferey R."/>
            <person name="Knauer R."/>
            <person name="Burda P."/>
            <person name="Stagljar I."/>
            <person name="Te Heesen S."/>
            <person name="Lehle L."/>
            <person name="Aebi M."/>
        </authorList>
    </citation>
    <scope>CHARACTERIZATION</scope>
</reference>
<reference key="5">
    <citation type="journal article" date="1997" name="J. Biol. Chem.">
        <title>The highly conserved Stt3 protein is a subunit of the yeast oligosaccharyltransferase and forms a subcomplex with Ost3p and Ost4p.</title>
        <authorList>
            <person name="Karaoglu D."/>
            <person name="Kelleher D.J."/>
            <person name="Gilmore R."/>
        </authorList>
    </citation>
    <scope>IDENTIFICATION IN THE OLIGOSACCHARYLTRANSFERASE COMPLEX</scope>
</reference>
<reference key="6">
    <citation type="journal article" date="1997" name="Mol. Gen. Genet.">
        <title>The STT3 protein is a component of the yeast oligosaccharyltransferase complex.</title>
        <authorList>
            <person name="Spirig U."/>
            <person name="Glavas M."/>
            <person name="Bodmer D."/>
            <person name="Reiss G."/>
            <person name="Burda P."/>
            <person name="Lippuner V."/>
            <person name="te Heesen S."/>
            <person name="Aebi M."/>
        </authorList>
    </citation>
    <scope>IDENTIFICATION IN THE OLIGOSACCHARYLTRANSFERASE COMPLEX</scope>
</reference>
<reference key="7">
    <citation type="journal article" date="2000" name="Proc. Natl. Acad. Sci. U.S.A.">
        <title>Studies on the role of the hydrophobic domain of Ost4p in interactions with other subunits of yeast oligosaccharyl transferase.</title>
        <authorList>
            <person name="Kim H."/>
            <person name="Park H."/>
            <person name="Montalvo L."/>
            <person name="Lennarz W.J."/>
        </authorList>
    </citation>
    <scope>INTERACTION WITH OST3 AND OST4</scope>
</reference>
<reference key="8">
    <citation type="journal article" date="2001" name="Biochemistry">
        <title>Allosteric regulation provides a molecular mechanism for preferential utilization of the fully assembled dolichol-linked oligosaccharide by the yeast oligosaccharyltransferase.</title>
        <authorList>
            <person name="Karaoglu D."/>
            <person name="Kelleher D.J."/>
            <person name="Gilmore R."/>
        </authorList>
    </citation>
    <scope>CATALYTIC ACTIVITY</scope>
    <scope>BIOPHYSICOCHEMICAL PROPERTIES</scope>
</reference>
<reference key="9">
    <citation type="journal article" date="2002" name="J. Biol. Chem.">
        <title>Studies on the function of oligosaccharyl transferase subunits. Stt3p is directly involved in the glycosylation process.</title>
        <authorList>
            <person name="Yan Q."/>
            <person name="Lennarz W.J."/>
        </authorList>
    </citation>
    <scope>FUNCTION</scope>
    <scope>MUTAGENESIS OF TRP-516; TRP-517; ASP-518; TYR-519; GLY-520 AND ILE-593</scope>
</reference>
<reference key="10">
    <citation type="journal article" date="2003" name="Nature">
        <title>Global analysis of protein localization in budding yeast.</title>
        <authorList>
            <person name="Huh W.-K."/>
            <person name="Falvo J.V."/>
            <person name="Gerke L.C."/>
            <person name="Carroll A.S."/>
            <person name="Howson R.W."/>
            <person name="Weissman J.S."/>
            <person name="O'Shea E.K."/>
        </authorList>
    </citation>
    <scope>SUBCELLULAR LOCATION [LARGE SCALE ANALYSIS]</scope>
</reference>
<reference key="11">
    <citation type="journal article" date="2003" name="Nature">
        <title>Global analysis of protein expression in yeast.</title>
        <authorList>
            <person name="Ghaemmaghami S."/>
            <person name="Huh W.-K."/>
            <person name="Bower K."/>
            <person name="Howson R.W."/>
            <person name="Belle A."/>
            <person name="Dephoure N."/>
            <person name="O'Shea E.K."/>
            <person name="Weissman J.S."/>
        </authorList>
    </citation>
    <scope>LEVEL OF PROTEIN EXPRESSION [LARGE SCALE ANALYSIS]</scope>
</reference>
<reference key="12">
    <citation type="journal article" date="2005" name="FEBS Lett.">
        <title>Yeast oligosaccharyltransferase consists of two functionally distinct sub-complexes, specified by either the Ost3p or Ost6p subunit.</title>
        <authorList>
            <person name="Schwarz M."/>
            <person name="Knauer R."/>
            <person name="Lehle L."/>
        </authorList>
    </citation>
    <scope>COMPOSITION OF OLIGOSACCHARYLTRANSFERASE COMPLEXES</scope>
</reference>
<reference key="13">
    <citation type="journal article" date="2005" name="Glycobiology">
        <title>The 3.4-kDa Ost4 protein is required for the assembly of two distinct oligosaccharyltransferase complexes in yeast.</title>
        <authorList>
            <person name="Spirig U."/>
            <person name="Bodmer D."/>
            <person name="Wacker M."/>
            <person name="Burda P."/>
            <person name="Aebi M."/>
        </authorList>
    </citation>
    <scope>COMPOSITION OF OLIGOSACCHARYLTRANSFERASE COMPLEXES</scope>
</reference>
<reference key="14">
    <citation type="journal article" date="2005" name="Glycobiology">
        <title>Two oligosaccharyl transferase complexes exist in yeast and associate with two different translocons.</title>
        <authorList>
            <person name="Yan A."/>
            <person name="Lennarz W.J."/>
        </authorList>
    </citation>
    <scope>COMPOSITION OF OLIGOSACCHARYLTRANSFERASE COMPLEXES</scope>
</reference>
<reference key="15">
    <citation type="journal article" date="2005" name="J. Biol. Chem.">
        <title>Membrane topology of the STT3 subunit of the oligosaccharyl transferase complex.</title>
        <authorList>
            <person name="Kim H."/>
            <person name="von Heijne G."/>
            <person name="Nilsson I."/>
        </authorList>
    </citation>
    <scope>TOPOLOGY</scope>
    <scope>MUTAGENESIS OF ARG-159; SER-160; SER-164; TRP-208; GLY-210; VAL-393 AND ARG-404</scope>
</reference>
<reference key="16">
    <citation type="journal article" date="2005" name="J. Biol. Chem.">
        <title>Subunits of the translocon interact with components of the oligosaccharyl transferase complex.</title>
        <authorList>
            <person name="Chavan M."/>
            <person name="Yan A."/>
            <person name="Lennarz W.J."/>
        </authorList>
    </citation>
    <scope>INTERACTION WITH SEC61</scope>
</reference>
<reference key="17">
    <citation type="journal article" date="2005" name="Proc. Natl. Acad. Sci. U.S.A.">
        <title>Studies of yeast oligosaccharyl transferase subunits using the split-ubiquitin system: topological features and in vivo interactions.</title>
        <authorList>
            <person name="Yan A."/>
            <person name="Wu E."/>
            <person name="Lennarz W.J."/>
        </authorList>
    </citation>
    <scope>TOPOLOGY</scope>
    <scope>INTERACTION WITH OST3; OST4; OST6; WBP1 AND SWP1</scope>
</reference>
<reference key="18">
    <citation type="journal article" date="2006" name="Proc. Natl. Acad. Sci. U.S.A.">
        <title>A global topology map of the Saccharomyces cerevisiae membrane proteome.</title>
        <authorList>
            <person name="Kim H."/>
            <person name="Melen K."/>
            <person name="Oesterberg M."/>
            <person name="von Heijne G."/>
        </authorList>
    </citation>
    <scope>TOPOLOGY [LARGE SCALE ANALYSIS]</scope>
    <source>
        <strain>ATCC 208353 / W303-1A</strain>
    </source>
</reference>
<reference key="19">
    <citation type="journal article" date="2012" name="J. Biol. Chem.">
        <title>Eukaryotic N-glycosylation occurs via the membrane-anchored C-terminal domain of the Stt3p subunit of oligosaccharyltransferase.</title>
        <authorList>
            <person name="Huang C."/>
            <person name="Bhaskaran R."/>
            <person name="Mohanty S."/>
        </authorList>
    </citation>
    <scope>STRUCTURE BY NMR OF 465-718</scope>
    <scope>TOPOLOGY</scope>
</reference>
<reference key="20">
    <citation type="journal article" date="2018" name="Nature">
        <title>The atomic structure of a eukaryotic oligosaccharyltransferase complex.</title>
        <authorList>
            <person name="Bai L."/>
            <person name="Wang T."/>
            <person name="Zhao G."/>
            <person name="Kovach A."/>
            <person name="Li H."/>
        </authorList>
    </citation>
    <scope>STRUCTURE BY ELECTRON MICROSCOPY (3.50 ANGSTROMS)</scope>
</reference>
<reference key="21">
    <citation type="journal article" date="2018" name="Science">
        <title>Structure of the yeast oligosaccharyltransferase complex gives insight into eukaryotic N-glycosylation.</title>
        <authorList>
            <person name="Wild R."/>
            <person name="Kowal J."/>
            <person name="Eyring J."/>
            <person name="Ngwa E.M."/>
            <person name="Aebi M."/>
            <person name="Locher K.P."/>
        </authorList>
    </citation>
    <scope>STRUCTURE BY ELECTRON MICROSCOPY (3.30 ANGSTROMS)</scope>
    <scope>GLYCOSYLATION AT ASN-539</scope>
    <scope>MUTAGENESIS OF ASP-47; ASP-166; GLU-168; GLU-350; ARG-404 AND LYS-586</scope>
</reference>
<name>STT3_YEAST</name>